<sequence>MKTSIAIVDYGMGNLRSVAQALKKAEPAADVAIVDTPAAIRAADRVVLPGQGAMPDCMRCLGESGLQEAVVEASRTKPLLGVCVGEQMLFDWSAEGDTKGLGLLPGKVVRFELDGRLQDDGSRFKVPQMGWNRVRQSRAHALWDGVPDDAYFYFVHSYYVMPDDPAHTVGETAYGAPFTSAVARDNIFATQFHPEKSAEVGLRLYRNFVHWKP</sequence>
<reference key="1">
    <citation type="journal article" date="2003" name="J. Bacteriol.">
        <title>Distribution and organization of auxotrophic genes on the multichromosomal genome of Burkholderia multivorans ATCC 17616.</title>
        <authorList>
            <person name="Komatsu H."/>
            <person name="Imura Y."/>
            <person name="Ohori A."/>
            <person name="Nagata Y."/>
            <person name="Tsuda M."/>
        </authorList>
    </citation>
    <scope>NUCLEOTIDE SEQUENCE [GENOMIC DNA]</scope>
</reference>
<reference key="2">
    <citation type="submission" date="2007-10" db="EMBL/GenBank/DDBJ databases">
        <title>Complete sequence of chromosome 1 of Burkholderia multivorans ATCC 17616.</title>
        <authorList>
            <person name="Copeland A."/>
            <person name="Lucas S."/>
            <person name="Lapidus A."/>
            <person name="Barry K."/>
            <person name="Glavina del Rio T."/>
            <person name="Dalin E."/>
            <person name="Tice H."/>
            <person name="Pitluck S."/>
            <person name="Chain P."/>
            <person name="Malfatti S."/>
            <person name="Shin M."/>
            <person name="Vergez L."/>
            <person name="Schmutz J."/>
            <person name="Larimer F."/>
            <person name="Land M."/>
            <person name="Hauser L."/>
            <person name="Kyrpides N."/>
            <person name="Kim E."/>
            <person name="Tiedje J."/>
            <person name="Richardson P."/>
        </authorList>
    </citation>
    <scope>NUCLEOTIDE SEQUENCE [LARGE SCALE GENOMIC DNA]</scope>
    <source>
        <strain>ATCC 17616 / 249</strain>
    </source>
</reference>
<reference key="3">
    <citation type="submission" date="2007-04" db="EMBL/GenBank/DDBJ databases">
        <title>Complete genome sequence of Burkholderia multivorans ATCC 17616.</title>
        <authorList>
            <person name="Ohtsubo Y."/>
            <person name="Yamashita A."/>
            <person name="Kurokawa K."/>
            <person name="Takami H."/>
            <person name="Yuhara S."/>
            <person name="Nishiyama E."/>
            <person name="Endo R."/>
            <person name="Miyazaki R."/>
            <person name="Ono A."/>
            <person name="Yano K."/>
            <person name="Ito M."/>
            <person name="Sota M."/>
            <person name="Yuji N."/>
            <person name="Hattori M."/>
            <person name="Tsuda M."/>
        </authorList>
    </citation>
    <scope>NUCLEOTIDE SEQUENCE [LARGE SCALE GENOMIC DNA]</scope>
    <source>
        <strain>ATCC 17616 / 249</strain>
    </source>
</reference>
<proteinExistence type="inferred from homology"/>
<organism>
    <name type="scientific">Burkholderia multivorans (strain ATCC 17616 / 249)</name>
    <dbReference type="NCBI Taxonomy" id="395019"/>
    <lineage>
        <taxon>Bacteria</taxon>
        <taxon>Pseudomonadati</taxon>
        <taxon>Pseudomonadota</taxon>
        <taxon>Betaproteobacteria</taxon>
        <taxon>Burkholderiales</taxon>
        <taxon>Burkholderiaceae</taxon>
        <taxon>Burkholderia</taxon>
        <taxon>Burkholderia cepacia complex</taxon>
    </lineage>
</organism>
<evidence type="ECO:0000255" key="1">
    <source>
        <dbReference type="HAMAP-Rule" id="MF_00278"/>
    </source>
</evidence>
<dbReference type="EC" id="4.3.2.10" evidence="1"/>
<dbReference type="EC" id="3.5.1.2" evidence="1"/>
<dbReference type="EMBL" id="AB091436">
    <property type="protein sequence ID" value="BAC65274.1"/>
    <property type="molecule type" value="Genomic_DNA"/>
</dbReference>
<dbReference type="EMBL" id="CP000868">
    <property type="protein sequence ID" value="ABX14027.1"/>
    <property type="molecule type" value="Genomic_DNA"/>
</dbReference>
<dbReference type="EMBL" id="AP009385">
    <property type="protein sequence ID" value="BAG44807.1"/>
    <property type="molecule type" value="Genomic_DNA"/>
</dbReference>
<dbReference type="RefSeq" id="WP_006400580.1">
    <property type="nucleotide sequence ID" value="NC_010804.1"/>
</dbReference>
<dbReference type="SMR" id="Q845U9"/>
<dbReference type="STRING" id="395019.BMULJ_02922"/>
<dbReference type="KEGG" id="bmj:BMULJ_02922"/>
<dbReference type="KEGG" id="bmu:Bmul_0332"/>
<dbReference type="eggNOG" id="COG0118">
    <property type="taxonomic scope" value="Bacteria"/>
</dbReference>
<dbReference type="HOGENOM" id="CLU_071837_2_0_4"/>
<dbReference type="UniPathway" id="UPA00031">
    <property type="reaction ID" value="UER00010"/>
</dbReference>
<dbReference type="Proteomes" id="UP000008815">
    <property type="component" value="Chromosome 1"/>
</dbReference>
<dbReference type="GO" id="GO:0005737">
    <property type="term" value="C:cytoplasm"/>
    <property type="evidence" value="ECO:0007669"/>
    <property type="project" value="UniProtKB-SubCell"/>
</dbReference>
<dbReference type="GO" id="GO:0004359">
    <property type="term" value="F:glutaminase activity"/>
    <property type="evidence" value="ECO:0007669"/>
    <property type="project" value="UniProtKB-EC"/>
</dbReference>
<dbReference type="GO" id="GO:0000107">
    <property type="term" value="F:imidazoleglycerol-phosphate synthase activity"/>
    <property type="evidence" value="ECO:0007669"/>
    <property type="project" value="UniProtKB-UniRule"/>
</dbReference>
<dbReference type="GO" id="GO:0016829">
    <property type="term" value="F:lyase activity"/>
    <property type="evidence" value="ECO:0007669"/>
    <property type="project" value="UniProtKB-KW"/>
</dbReference>
<dbReference type="GO" id="GO:0000105">
    <property type="term" value="P:L-histidine biosynthetic process"/>
    <property type="evidence" value="ECO:0007669"/>
    <property type="project" value="UniProtKB-UniRule"/>
</dbReference>
<dbReference type="CDD" id="cd01748">
    <property type="entry name" value="GATase1_IGP_Synthase"/>
    <property type="match status" value="1"/>
</dbReference>
<dbReference type="Gene3D" id="3.40.50.880">
    <property type="match status" value="1"/>
</dbReference>
<dbReference type="HAMAP" id="MF_00278">
    <property type="entry name" value="HisH"/>
    <property type="match status" value="1"/>
</dbReference>
<dbReference type="InterPro" id="IPR029062">
    <property type="entry name" value="Class_I_gatase-like"/>
</dbReference>
<dbReference type="InterPro" id="IPR017926">
    <property type="entry name" value="GATASE"/>
</dbReference>
<dbReference type="InterPro" id="IPR010139">
    <property type="entry name" value="Imidazole-glycPsynth_HisH"/>
</dbReference>
<dbReference type="NCBIfam" id="TIGR01855">
    <property type="entry name" value="IMP_synth_hisH"/>
    <property type="match status" value="1"/>
</dbReference>
<dbReference type="PANTHER" id="PTHR42701">
    <property type="entry name" value="IMIDAZOLE GLYCEROL PHOSPHATE SYNTHASE SUBUNIT HISH"/>
    <property type="match status" value="1"/>
</dbReference>
<dbReference type="PANTHER" id="PTHR42701:SF2">
    <property type="entry name" value="IMIDAZOLE GLYCEROL PHOSPHATE SYNTHASE SUBUNIT HISH 1"/>
    <property type="match status" value="1"/>
</dbReference>
<dbReference type="Pfam" id="PF00117">
    <property type="entry name" value="GATase"/>
    <property type="match status" value="1"/>
</dbReference>
<dbReference type="PIRSF" id="PIRSF000495">
    <property type="entry name" value="Amidotransf_hisH"/>
    <property type="match status" value="1"/>
</dbReference>
<dbReference type="SUPFAM" id="SSF52317">
    <property type="entry name" value="Class I glutamine amidotransferase-like"/>
    <property type="match status" value="1"/>
</dbReference>
<dbReference type="PROSITE" id="PS51273">
    <property type="entry name" value="GATASE_TYPE_1"/>
    <property type="match status" value="1"/>
</dbReference>
<accession>Q845U9</accession>
<accession>A9AE05</accession>
<protein>
    <recommendedName>
        <fullName evidence="1">Imidazole glycerol phosphate synthase subunit HisH</fullName>
        <ecNumber evidence="1">4.3.2.10</ecNumber>
    </recommendedName>
    <alternativeName>
        <fullName evidence="1">IGP synthase glutaminase subunit</fullName>
        <ecNumber evidence="1">3.5.1.2</ecNumber>
    </alternativeName>
    <alternativeName>
        <fullName evidence="1">IGP synthase subunit HisH</fullName>
    </alternativeName>
    <alternativeName>
        <fullName evidence="1">ImGP synthase subunit HisH</fullName>
        <shortName evidence="1">IGPS subunit HisH</shortName>
    </alternativeName>
</protein>
<gene>
    <name evidence="1" type="primary">hisH</name>
    <name type="ordered locus">Bmul_0332</name>
    <name type="ordered locus">BMULJ_02922</name>
</gene>
<comment type="function">
    <text evidence="1">IGPS catalyzes the conversion of PRFAR and glutamine to IGP, AICAR and glutamate. The HisH subunit catalyzes the hydrolysis of glutamine to glutamate and ammonia as part of the synthesis of IGP and AICAR. The resulting ammonia molecule is channeled to the active site of HisF.</text>
</comment>
<comment type="catalytic activity">
    <reaction evidence="1">
        <text>5-[(5-phospho-1-deoxy-D-ribulos-1-ylimino)methylamino]-1-(5-phospho-beta-D-ribosyl)imidazole-4-carboxamide + L-glutamine = D-erythro-1-(imidazol-4-yl)glycerol 3-phosphate + 5-amino-1-(5-phospho-beta-D-ribosyl)imidazole-4-carboxamide + L-glutamate + H(+)</text>
        <dbReference type="Rhea" id="RHEA:24793"/>
        <dbReference type="ChEBI" id="CHEBI:15378"/>
        <dbReference type="ChEBI" id="CHEBI:29985"/>
        <dbReference type="ChEBI" id="CHEBI:58278"/>
        <dbReference type="ChEBI" id="CHEBI:58359"/>
        <dbReference type="ChEBI" id="CHEBI:58475"/>
        <dbReference type="ChEBI" id="CHEBI:58525"/>
        <dbReference type="EC" id="4.3.2.10"/>
    </reaction>
</comment>
<comment type="catalytic activity">
    <reaction evidence="1">
        <text>L-glutamine + H2O = L-glutamate + NH4(+)</text>
        <dbReference type="Rhea" id="RHEA:15889"/>
        <dbReference type="ChEBI" id="CHEBI:15377"/>
        <dbReference type="ChEBI" id="CHEBI:28938"/>
        <dbReference type="ChEBI" id="CHEBI:29985"/>
        <dbReference type="ChEBI" id="CHEBI:58359"/>
        <dbReference type="EC" id="3.5.1.2"/>
    </reaction>
</comment>
<comment type="pathway">
    <text evidence="1">Amino-acid biosynthesis; L-histidine biosynthesis; L-histidine from 5-phospho-alpha-D-ribose 1-diphosphate: step 5/9.</text>
</comment>
<comment type="subunit">
    <text evidence="1">Heterodimer of HisH and HisF.</text>
</comment>
<comment type="subcellular location">
    <subcellularLocation>
        <location evidence="1">Cytoplasm</location>
    </subcellularLocation>
</comment>
<name>HIS5_BURM1</name>
<keyword id="KW-0028">Amino-acid biosynthesis</keyword>
<keyword id="KW-0963">Cytoplasm</keyword>
<keyword id="KW-0315">Glutamine amidotransferase</keyword>
<keyword id="KW-0368">Histidine biosynthesis</keyword>
<keyword id="KW-0378">Hydrolase</keyword>
<keyword id="KW-0456">Lyase</keyword>
<keyword id="KW-1185">Reference proteome</keyword>
<feature type="chain" id="PRO_0000152360" description="Imidazole glycerol phosphate synthase subunit HisH">
    <location>
        <begin position="1"/>
        <end position="213"/>
    </location>
</feature>
<feature type="domain" description="Glutamine amidotransferase type-1" evidence="1">
    <location>
        <begin position="4"/>
        <end position="213"/>
    </location>
</feature>
<feature type="active site" description="Nucleophile" evidence="1">
    <location>
        <position position="83"/>
    </location>
</feature>
<feature type="active site" evidence="1">
    <location>
        <position position="193"/>
    </location>
</feature>
<feature type="active site" evidence="1">
    <location>
        <position position="195"/>
    </location>
</feature>